<feature type="chain" id="PRO_0000354742" description="Catalase-peroxidase">
    <location>
        <begin position="1"/>
        <end position="728"/>
    </location>
</feature>
<feature type="active site" description="Proton acceptor" evidence="1">
    <location>
        <position position="92"/>
    </location>
</feature>
<feature type="binding site" description="axial binding residue" evidence="1">
    <location>
        <position position="259"/>
    </location>
    <ligand>
        <name>heme b</name>
        <dbReference type="ChEBI" id="CHEBI:60344"/>
    </ligand>
    <ligandPart>
        <name>Fe</name>
        <dbReference type="ChEBI" id="CHEBI:18248"/>
    </ligandPart>
</feature>
<feature type="site" description="Transition state stabilizer" evidence="1">
    <location>
        <position position="88"/>
    </location>
</feature>
<feature type="cross-link" description="Tryptophyl-tyrosyl-methioninium (Trp-Tyr) (with M-244)" evidence="1">
    <location>
        <begin position="91"/>
        <end position="218"/>
    </location>
</feature>
<feature type="cross-link" description="Tryptophyl-tyrosyl-methioninium (Tyr-Met) (with W-91)" evidence="1">
    <location>
        <begin position="218"/>
        <end position="244"/>
    </location>
</feature>
<organism>
    <name type="scientific">Burkholderia mallei (strain NCTC 10229)</name>
    <dbReference type="NCBI Taxonomy" id="412022"/>
    <lineage>
        <taxon>Bacteria</taxon>
        <taxon>Pseudomonadati</taxon>
        <taxon>Pseudomonadota</taxon>
        <taxon>Betaproteobacteria</taxon>
        <taxon>Burkholderiales</taxon>
        <taxon>Burkholderiaceae</taxon>
        <taxon>Burkholderia</taxon>
        <taxon>pseudomallei group</taxon>
    </lineage>
</organism>
<evidence type="ECO:0000255" key="1">
    <source>
        <dbReference type="HAMAP-Rule" id="MF_01961"/>
    </source>
</evidence>
<keyword id="KW-0349">Heme</keyword>
<keyword id="KW-0376">Hydrogen peroxide</keyword>
<keyword id="KW-0408">Iron</keyword>
<keyword id="KW-0479">Metal-binding</keyword>
<keyword id="KW-0560">Oxidoreductase</keyword>
<keyword id="KW-0575">Peroxidase</keyword>
<gene>
    <name evidence="1" type="primary">katG</name>
    <name type="ordered locus">BMA10229_A1169</name>
</gene>
<comment type="function">
    <text evidence="1">Bifunctional enzyme with both catalase and broad-spectrum peroxidase activity.</text>
</comment>
<comment type="catalytic activity">
    <reaction evidence="1">
        <text>H2O2 + AH2 = A + 2 H2O</text>
        <dbReference type="Rhea" id="RHEA:30275"/>
        <dbReference type="ChEBI" id="CHEBI:13193"/>
        <dbReference type="ChEBI" id="CHEBI:15377"/>
        <dbReference type="ChEBI" id="CHEBI:16240"/>
        <dbReference type="ChEBI" id="CHEBI:17499"/>
        <dbReference type="EC" id="1.11.1.21"/>
    </reaction>
</comment>
<comment type="catalytic activity">
    <reaction evidence="1">
        <text>2 H2O2 = O2 + 2 H2O</text>
        <dbReference type="Rhea" id="RHEA:20309"/>
        <dbReference type="ChEBI" id="CHEBI:15377"/>
        <dbReference type="ChEBI" id="CHEBI:15379"/>
        <dbReference type="ChEBI" id="CHEBI:16240"/>
        <dbReference type="EC" id="1.11.1.21"/>
    </reaction>
</comment>
<comment type="cofactor">
    <cofactor evidence="1">
        <name>heme b</name>
        <dbReference type="ChEBI" id="CHEBI:60344"/>
    </cofactor>
    <text evidence="1">Binds 1 heme b (iron(II)-protoporphyrin IX) group per dimer.</text>
</comment>
<comment type="subunit">
    <text evidence="1">Homodimer or homotetramer.</text>
</comment>
<comment type="PTM">
    <text evidence="1">Formation of the three residue Trp-Tyr-Met cross-link is important for the catalase, but not the peroxidase activity of the enzyme.</text>
</comment>
<comment type="similarity">
    <text evidence="1">Belongs to the peroxidase family. Peroxidase/catalase subfamily.</text>
</comment>
<accession>A2S5D5</accession>
<sequence>MSNEAKCPFHQAAGNGTSNRDWWPNQLDLSILHRHSSLSDPMGKDFNYAQAFEKLDLAAVKRDLHALMTTSQDWWPADFGHYGGLFIRMAWHSAGTYRTADGRGGAGEGQQRFAPLNSWPDNANLDKARRLLWPIKQKYGRAISWADLLILTGNVALESMGFKTFGFAGGRADTWEPEDVYWGSEKIWLELSGGPNSRYSGDRQLENPLAAVQMGLIYVNPEGPDGNPDPVAAARDIRDTFARMAMNDEETVALIAGGHTFGKTHGAGPASNVGAEPEAAGIEAQGLGWKSAYRTGKGADAITSGLEVTWTTTPTQWSHNFFENLFGYEWELTKSPAGAHQWVAKGADAVIPDAFDPSKKHRPTMLTTDLSLRFDPAYEKISRRFHENPEQFADAFARAWFKLTHRDMGPRARYLGPEVPAEVLLWQDPIPAVDHPLIDAADAAELKAKVLASGLTVSQLVSTAWAAASTFRGSDKRGGANGARIRLAPQKDWEANQPEQLAAVLETLEAIRTAFNGAQRGGKQVSLADLIVLAGCAGVEQAAKNAGHAVTVPFAPGRADASQEQTDVESMAVLEPVADGFRNYLKGKYRVPAEVLLVDKAQLLTLSAPEMTVLLGGLRVLGANVGQSRHGVFTAREQALTNDFFVNLLDMGTEWKPTAADADVFEGRDRATGALKWTGTRVDLVFGSHSQLRALAEVYGSADAQEKFVRDFVAVWNKVMNLDRFDLA</sequence>
<dbReference type="EC" id="1.11.1.21" evidence="1"/>
<dbReference type="EMBL" id="CP000546">
    <property type="protein sequence ID" value="ABN03788.1"/>
    <property type="molecule type" value="Genomic_DNA"/>
</dbReference>
<dbReference type="RefSeq" id="WP_004194237.1">
    <property type="nucleotide sequence ID" value="NC_008836.1"/>
</dbReference>
<dbReference type="SMR" id="A2S5D5"/>
<dbReference type="GeneID" id="93061455"/>
<dbReference type="KEGG" id="bml:BMA10229_A1169"/>
<dbReference type="HOGENOM" id="CLU_025424_2_0_4"/>
<dbReference type="Proteomes" id="UP000002283">
    <property type="component" value="Chromosome I"/>
</dbReference>
<dbReference type="GO" id="GO:0005829">
    <property type="term" value="C:cytosol"/>
    <property type="evidence" value="ECO:0007669"/>
    <property type="project" value="TreeGrafter"/>
</dbReference>
<dbReference type="GO" id="GO:0004096">
    <property type="term" value="F:catalase activity"/>
    <property type="evidence" value="ECO:0007669"/>
    <property type="project" value="UniProtKB-UniRule"/>
</dbReference>
<dbReference type="GO" id="GO:0020037">
    <property type="term" value="F:heme binding"/>
    <property type="evidence" value="ECO:0007669"/>
    <property type="project" value="InterPro"/>
</dbReference>
<dbReference type="GO" id="GO:0046872">
    <property type="term" value="F:metal ion binding"/>
    <property type="evidence" value="ECO:0007669"/>
    <property type="project" value="UniProtKB-KW"/>
</dbReference>
<dbReference type="GO" id="GO:0070301">
    <property type="term" value="P:cellular response to hydrogen peroxide"/>
    <property type="evidence" value="ECO:0007669"/>
    <property type="project" value="TreeGrafter"/>
</dbReference>
<dbReference type="GO" id="GO:0042744">
    <property type="term" value="P:hydrogen peroxide catabolic process"/>
    <property type="evidence" value="ECO:0007669"/>
    <property type="project" value="UniProtKB-KW"/>
</dbReference>
<dbReference type="CDD" id="cd00649">
    <property type="entry name" value="catalase_peroxidase_1"/>
    <property type="match status" value="1"/>
</dbReference>
<dbReference type="CDD" id="cd08200">
    <property type="entry name" value="catalase_peroxidase_2"/>
    <property type="match status" value="1"/>
</dbReference>
<dbReference type="FunFam" id="1.10.420.10:FF:000002">
    <property type="entry name" value="Catalase-peroxidase"/>
    <property type="match status" value="1"/>
</dbReference>
<dbReference type="FunFam" id="1.10.420.10:FF:000004">
    <property type="entry name" value="Catalase-peroxidase"/>
    <property type="match status" value="1"/>
</dbReference>
<dbReference type="FunFam" id="1.10.520.10:FF:000002">
    <property type="entry name" value="Catalase-peroxidase"/>
    <property type="match status" value="1"/>
</dbReference>
<dbReference type="FunFam" id="1.10.520.10:FF:000004">
    <property type="entry name" value="Catalase-peroxidase"/>
    <property type="match status" value="1"/>
</dbReference>
<dbReference type="Gene3D" id="1.10.520.10">
    <property type="match status" value="2"/>
</dbReference>
<dbReference type="Gene3D" id="1.10.420.10">
    <property type="entry name" value="Peroxidase, domain 2"/>
    <property type="match status" value="2"/>
</dbReference>
<dbReference type="HAMAP" id="MF_01961">
    <property type="entry name" value="Catal_peroxid"/>
    <property type="match status" value="1"/>
</dbReference>
<dbReference type="InterPro" id="IPR000763">
    <property type="entry name" value="Catalase_peroxidase"/>
</dbReference>
<dbReference type="InterPro" id="IPR002016">
    <property type="entry name" value="Haem_peroxidase"/>
</dbReference>
<dbReference type="InterPro" id="IPR010255">
    <property type="entry name" value="Haem_peroxidase_sf"/>
</dbReference>
<dbReference type="InterPro" id="IPR019794">
    <property type="entry name" value="Peroxidases_AS"/>
</dbReference>
<dbReference type="InterPro" id="IPR019793">
    <property type="entry name" value="Peroxidases_heam-ligand_BS"/>
</dbReference>
<dbReference type="NCBIfam" id="TIGR00198">
    <property type="entry name" value="cat_per_HPI"/>
    <property type="match status" value="1"/>
</dbReference>
<dbReference type="NCBIfam" id="NF011635">
    <property type="entry name" value="PRK15061.1"/>
    <property type="match status" value="1"/>
</dbReference>
<dbReference type="PANTHER" id="PTHR30555:SF0">
    <property type="entry name" value="CATALASE-PEROXIDASE"/>
    <property type="match status" value="1"/>
</dbReference>
<dbReference type="PANTHER" id="PTHR30555">
    <property type="entry name" value="HYDROPEROXIDASE I, BIFUNCTIONAL CATALASE-PEROXIDASE"/>
    <property type="match status" value="1"/>
</dbReference>
<dbReference type="Pfam" id="PF00141">
    <property type="entry name" value="peroxidase"/>
    <property type="match status" value="2"/>
</dbReference>
<dbReference type="PRINTS" id="PR00460">
    <property type="entry name" value="BPEROXIDASE"/>
</dbReference>
<dbReference type="PRINTS" id="PR00458">
    <property type="entry name" value="PEROXIDASE"/>
</dbReference>
<dbReference type="SUPFAM" id="SSF48113">
    <property type="entry name" value="Heme-dependent peroxidases"/>
    <property type="match status" value="2"/>
</dbReference>
<dbReference type="PROSITE" id="PS00435">
    <property type="entry name" value="PEROXIDASE_1"/>
    <property type="match status" value="1"/>
</dbReference>
<dbReference type="PROSITE" id="PS00436">
    <property type="entry name" value="PEROXIDASE_2"/>
    <property type="match status" value="1"/>
</dbReference>
<dbReference type="PROSITE" id="PS50873">
    <property type="entry name" value="PEROXIDASE_4"/>
    <property type="match status" value="1"/>
</dbReference>
<protein>
    <recommendedName>
        <fullName evidence="1">Catalase-peroxidase</fullName>
        <shortName evidence="1">CP</shortName>
        <ecNumber evidence="1">1.11.1.21</ecNumber>
    </recommendedName>
    <alternativeName>
        <fullName evidence="1">Peroxidase/catalase</fullName>
    </alternativeName>
</protein>
<reference key="1">
    <citation type="journal article" date="2010" name="Genome Biol. Evol.">
        <title>Continuing evolution of Burkholderia mallei through genome reduction and large-scale rearrangements.</title>
        <authorList>
            <person name="Losada L."/>
            <person name="Ronning C.M."/>
            <person name="DeShazer D."/>
            <person name="Woods D."/>
            <person name="Fedorova N."/>
            <person name="Kim H.S."/>
            <person name="Shabalina S.A."/>
            <person name="Pearson T.R."/>
            <person name="Brinkac L."/>
            <person name="Tan P."/>
            <person name="Nandi T."/>
            <person name="Crabtree J."/>
            <person name="Badger J."/>
            <person name="Beckstrom-Sternberg S."/>
            <person name="Saqib M."/>
            <person name="Schutzer S.E."/>
            <person name="Keim P."/>
            <person name="Nierman W.C."/>
        </authorList>
    </citation>
    <scope>NUCLEOTIDE SEQUENCE [LARGE SCALE GENOMIC DNA]</scope>
    <source>
        <strain>NCTC 10229</strain>
    </source>
</reference>
<name>KATG_BURM9</name>
<proteinExistence type="inferred from homology"/>